<gene>
    <name type="primary">SS2</name>
    <name type="synonym">SSII</name>
</gene>
<organism>
    <name type="scientific">Solanum tuberosum</name>
    <name type="common">Potato</name>
    <dbReference type="NCBI Taxonomy" id="4113"/>
    <lineage>
        <taxon>Eukaryota</taxon>
        <taxon>Viridiplantae</taxon>
        <taxon>Streptophyta</taxon>
        <taxon>Embryophyta</taxon>
        <taxon>Tracheophyta</taxon>
        <taxon>Spermatophyta</taxon>
        <taxon>Magnoliopsida</taxon>
        <taxon>eudicotyledons</taxon>
        <taxon>Gunneridae</taxon>
        <taxon>Pentapetalae</taxon>
        <taxon>asterids</taxon>
        <taxon>lamiids</taxon>
        <taxon>Solanales</taxon>
        <taxon>Solanaceae</taxon>
        <taxon>Solanoideae</taxon>
        <taxon>Solaneae</taxon>
        <taxon>Solanum</taxon>
    </lineage>
</organism>
<proteinExistence type="evidence at protein level"/>
<name>SSY2_SOLTU</name>
<keyword id="KW-0035">Amyloplast</keyword>
<keyword id="KW-0150">Chloroplast</keyword>
<keyword id="KW-0903">Direct protein sequencing</keyword>
<keyword id="KW-0328">Glycosyltransferase</keyword>
<keyword id="KW-0934">Plastid</keyword>
<keyword id="KW-1185">Reference proteome</keyword>
<keyword id="KW-0750">Starch biosynthesis</keyword>
<keyword id="KW-0808">Transferase</keyword>
<keyword id="KW-0809">Transit peptide</keyword>
<protein>
    <recommendedName>
        <fullName>Granule-bound starch synthase 2, chloroplastic/amyloplastic</fullName>
        <ecNumber>2.4.1.21</ecNumber>
    </recommendedName>
    <alternativeName>
        <fullName>Granule-bound starch synthase II</fullName>
        <shortName>GBSS-II</shortName>
        <shortName>SS II</shortName>
    </alternativeName>
</protein>
<comment type="function">
    <text evidence="3">Accounts for only 10 to 15% of the total soluble starch synthase activity in tubers.</text>
</comment>
<comment type="catalytic activity">
    <reaction>
        <text>[(1-&gt;4)-alpha-D-glucosyl](n) + ADP-alpha-D-glucose = [(1-&gt;4)-alpha-D-glucosyl](n+1) + ADP + H(+)</text>
        <dbReference type="Rhea" id="RHEA:18189"/>
        <dbReference type="Rhea" id="RHEA-COMP:9584"/>
        <dbReference type="Rhea" id="RHEA-COMP:9587"/>
        <dbReference type="ChEBI" id="CHEBI:15378"/>
        <dbReference type="ChEBI" id="CHEBI:15444"/>
        <dbReference type="ChEBI" id="CHEBI:57498"/>
        <dbReference type="ChEBI" id="CHEBI:456216"/>
        <dbReference type="EC" id="2.4.1.21"/>
    </reaction>
</comment>
<comment type="pathway">
    <text>Glycan biosynthesis; starch biosynthesis.</text>
</comment>
<comment type="subcellular location">
    <subcellularLocation>
        <location evidence="1">Plastid</location>
        <location evidence="1">Chloroplast</location>
    </subcellularLocation>
    <subcellularLocation>
        <location evidence="1">Plastid</location>
        <location evidence="1">Amyloplast</location>
    </subcellularLocation>
    <text evidence="1">Amyloplast or chloroplast, granule-bound and soluble.</text>
</comment>
<comment type="induction">
    <text>Constant expression in light and darkness.</text>
</comment>
<comment type="miscellaneous">
    <text>May be the main starch synthase responsible for the incorporation of phosphorylated precursors into growing alpha-1,4-glucans.</text>
</comment>
<comment type="similarity">
    <text evidence="5">Belongs to the glycosyltransferase 1 family. Bacterial/plant glycogen synthase subfamily.</text>
</comment>
<reference key="1">
    <citation type="journal article" date="1995" name="Plant J.">
        <title>Biochemical and molecular characterization of a novel starch synthase from potato tubers.</title>
        <authorList>
            <person name="Edwards A."/>
            <person name="Marshall J."/>
            <person name="Sidebottom C."/>
            <person name="Visser R.G.F."/>
            <person name="Smith A.M."/>
            <person name="Martin C."/>
        </authorList>
    </citation>
    <scope>NUCLEOTIDE SEQUENCE [MRNA]</scope>
    <scope>PROTEIN SEQUENCE OF 46-55</scope>
    <scope>VARIANT ASP-51</scope>
    <source>
        <strain>cv. Desiree</strain>
        <tissue>Tuber</tissue>
    </source>
</reference>
<reference key="2">
    <citation type="submission" date="2004-06" db="EMBL/GenBank/DDBJ databases">
        <title>Resequencing, expression and purification of His-tagged potato soluble starch synthase II in Escherichia coli.</title>
        <authorList>
            <person name="Shearer N."/>
            <person name="Edwards E.A."/>
            <person name="Martin C."/>
            <person name="Bornemann S."/>
        </authorList>
    </citation>
    <scope>SEQUENCE REVISION</scope>
</reference>
<reference key="3">
    <citation type="journal article" date="2011" name="Nature">
        <title>Genome sequence and analysis of the tuber crop potato.</title>
        <authorList>
            <consortium name="The Potato Genome Sequencing Consortium"/>
        </authorList>
    </citation>
    <scope>NUCLEOTIDE SEQUENCE [LARGE SCALE GENOMIC DNA]</scope>
    <source>
        <strain>cv. DM1-3 516 R44</strain>
    </source>
</reference>
<reference key="4">
    <citation type="journal article" date="1999" name="Planta">
        <title>Cloning and functional analysis of a cDNA encoding a starch synthase from potato (Solanum tuberosum L.) that is predominantly expressed in leaf tissue.</title>
        <authorList>
            <person name="Kossmann J."/>
            <person name="Abel G.J.W."/>
            <person name="Springer F."/>
            <person name="Lloyd J.R."/>
            <person name="Willmitzer L."/>
        </authorList>
    </citation>
    <scope>FUNCTION</scope>
</reference>
<accession>Q43847</accession>
<evidence type="ECO:0000250" key="1"/>
<evidence type="ECO:0000256" key="2">
    <source>
        <dbReference type="SAM" id="MobiDB-lite"/>
    </source>
</evidence>
<evidence type="ECO:0000269" key="3">
    <source>
    </source>
</evidence>
<evidence type="ECO:0000269" key="4">
    <source>
    </source>
</evidence>
<evidence type="ECO:0000305" key="5"/>
<feature type="transit peptide" description="Chloroplast" evidence="4">
    <location>
        <begin position="1"/>
        <end position="45"/>
    </location>
</feature>
<feature type="chain" id="PRO_0000011145" description="Granule-bound starch synthase 2, chloroplastic/amyloplastic">
    <location>
        <begin position="46"/>
        <end position="767"/>
    </location>
</feature>
<feature type="region of interest" description="Disordered" evidence="2">
    <location>
        <begin position="160"/>
        <end position="204"/>
    </location>
</feature>
<feature type="region of interest" description="Disordered" evidence="2">
    <location>
        <begin position="226"/>
        <end position="268"/>
    </location>
</feature>
<feature type="compositionally biased region" description="Low complexity" evidence="2">
    <location>
        <begin position="172"/>
        <end position="188"/>
    </location>
</feature>
<feature type="compositionally biased region" description="Basic and acidic residues" evidence="2">
    <location>
        <begin position="230"/>
        <end position="245"/>
    </location>
</feature>
<feature type="compositionally biased region" description="Acidic residues" evidence="2">
    <location>
        <begin position="253"/>
        <end position="262"/>
    </location>
</feature>
<feature type="binding site" evidence="1">
    <location>
        <position position="290"/>
    </location>
    <ligand>
        <name>ADP-alpha-D-glucose</name>
        <dbReference type="ChEBI" id="CHEBI:57498"/>
    </ligand>
</feature>
<feature type="sequence variant" evidence="4">
    <original>S</original>
    <variation>D</variation>
    <location>
        <position position="51"/>
    </location>
</feature>
<dbReference type="EC" id="2.4.1.21"/>
<dbReference type="EMBL" id="X87988">
    <property type="protein sequence ID" value="CAA61241.2"/>
    <property type="molecule type" value="mRNA"/>
</dbReference>
<dbReference type="PIR" id="T07667">
    <property type="entry name" value="T07667"/>
</dbReference>
<dbReference type="RefSeq" id="NP_001274977.1">
    <property type="nucleotide sequence ID" value="NM_001288048.1"/>
</dbReference>
<dbReference type="SMR" id="Q43847"/>
<dbReference type="FunCoup" id="Q43847">
    <property type="interactions" value="175"/>
</dbReference>
<dbReference type="STRING" id="4113.Q43847"/>
<dbReference type="CAZy" id="GT5">
    <property type="family name" value="Glycosyltransferase Family 5"/>
</dbReference>
<dbReference type="PaxDb" id="4113-PGSC0003DMT400003356"/>
<dbReference type="EnsemblPlants" id="PGSC0003DMT400003356">
    <property type="protein sequence ID" value="PGSC0003DMT400003356"/>
    <property type="gene ID" value="PGSC0003DMG400001328"/>
</dbReference>
<dbReference type="GeneID" id="102583115"/>
<dbReference type="Gramene" id="PGSC0003DMT400003356">
    <property type="protein sequence ID" value="PGSC0003DMT400003356"/>
    <property type="gene ID" value="PGSC0003DMG400001328"/>
</dbReference>
<dbReference type="KEGG" id="sot:102583115"/>
<dbReference type="eggNOG" id="ENOG502QT35">
    <property type="taxonomic scope" value="Eukaryota"/>
</dbReference>
<dbReference type="HOGENOM" id="CLU_009583_31_1_1"/>
<dbReference type="InParanoid" id="Q43847"/>
<dbReference type="OMA" id="RFPFFTH"/>
<dbReference type="OrthoDB" id="512920at2759"/>
<dbReference type="SABIO-RK" id="Q43847"/>
<dbReference type="UniPathway" id="UPA00152"/>
<dbReference type="Proteomes" id="UP000011115">
    <property type="component" value="Unassembled WGS sequence"/>
</dbReference>
<dbReference type="ExpressionAtlas" id="Q43847">
    <property type="expression patterns" value="baseline and differential"/>
</dbReference>
<dbReference type="GO" id="GO:0009501">
    <property type="term" value="C:amyloplast"/>
    <property type="evidence" value="ECO:0007669"/>
    <property type="project" value="UniProtKB-SubCell"/>
</dbReference>
<dbReference type="GO" id="GO:0009507">
    <property type="term" value="C:chloroplast"/>
    <property type="evidence" value="ECO:0007669"/>
    <property type="project" value="UniProtKB-SubCell"/>
</dbReference>
<dbReference type="GO" id="GO:0009011">
    <property type="term" value="F:alpha-1,4-glucan glucosyltransferase (ADP-glucose donor) activity"/>
    <property type="evidence" value="ECO:0007669"/>
    <property type="project" value="UniProtKB-EC"/>
</dbReference>
<dbReference type="GO" id="GO:0004373">
    <property type="term" value="F:alpha-1,4-glucan glucosyltransferase (UDP-glucose donor) activity"/>
    <property type="evidence" value="ECO:0007669"/>
    <property type="project" value="InterPro"/>
</dbReference>
<dbReference type="GO" id="GO:0019252">
    <property type="term" value="P:starch biosynthetic process"/>
    <property type="evidence" value="ECO:0007669"/>
    <property type="project" value="UniProtKB-UniPathway"/>
</dbReference>
<dbReference type="CDD" id="cd03791">
    <property type="entry name" value="GT5_Glycogen_synthase_DULL1-like"/>
    <property type="match status" value="1"/>
</dbReference>
<dbReference type="FunFam" id="3.40.50.2000:FF:000025">
    <property type="entry name" value="Starch synthase, chloroplastic/amyloplastic"/>
    <property type="match status" value="1"/>
</dbReference>
<dbReference type="FunFam" id="3.40.50.2000:FF:000048">
    <property type="entry name" value="Starch synthase, chloroplastic/amyloplastic"/>
    <property type="match status" value="1"/>
</dbReference>
<dbReference type="Gene3D" id="3.40.50.2000">
    <property type="entry name" value="Glycogen Phosphorylase B"/>
    <property type="match status" value="2"/>
</dbReference>
<dbReference type="HAMAP" id="MF_00484">
    <property type="entry name" value="Glycogen_synth"/>
    <property type="match status" value="1"/>
</dbReference>
<dbReference type="InterPro" id="IPR011835">
    <property type="entry name" value="GS/SS"/>
</dbReference>
<dbReference type="InterPro" id="IPR013534">
    <property type="entry name" value="Starch_synth_cat_dom"/>
</dbReference>
<dbReference type="NCBIfam" id="TIGR02095">
    <property type="entry name" value="glgA"/>
    <property type="match status" value="1"/>
</dbReference>
<dbReference type="PANTHER" id="PTHR45825">
    <property type="entry name" value="GRANULE-BOUND STARCH SYNTHASE 1, CHLOROPLASTIC/AMYLOPLASTIC"/>
    <property type="match status" value="1"/>
</dbReference>
<dbReference type="PANTHER" id="PTHR45825:SF2">
    <property type="entry name" value="STARCH SYNTHASE 2, CHLOROPLASTIC_AMYLOPLASTIC"/>
    <property type="match status" value="1"/>
</dbReference>
<dbReference type="Pfam" id="PF13692">
    <property type="entry name" value="Glyco_trans_1_4"/>
    <property type="match status" value="1"/>
</dbReference>
<dbReference type="Pfam" id="PF08323">
    <property type="entry name" value="Glyco_transf_5"/>
    <property type="match status" value="1"/>
</dbReference>
<dbReference type="SUPFAM" id="SSF53756">
    <property type="entry name" value="UDP-Glycosyltransferase/glycogen phosphorylase"/>
    <property type="match status" value="1"/>
</dbReference>
<sequence length="767" mass="85222">MENSILLHSGNQFHPNLPLLALRPKKLSLIHGSSREQMWRIKRVKATGENSGEAASADESNDALQVTIEKSKKVLAMQQDLLQQIAERRKVVSSIKSSLANAKGTYDGGSGSLSDVDIPDVDKDYNVTVPSTAATPITDVDKNTPPAISQDFVESKREIKRDLADERAPPLSRSSITASSQISSTVSSKRTLNVPPETPKSSQETLLDVNSRKSLVDVPGKKIQSYMPSLRKESSASHVEQRNENLEGSSAEANEETEDPVNIDEKPPPLAGTNVMNIILVASECAPWSKTGGLGDVAGALPKALARRGHRVMVVAPRYDNYPEPQDSGVRKIYKVDGQDVEVTYFQAFIDGVDFVFIDSHMFRHIGNNIYGGNRVDILKRMVLFCKAAIEVPWHVPCGGVCYGDGNLVFIANDWHTALLPVYLKAYYRDNGIMNYTRSVLVIHNIAHQGRGPLEDFSYVDLPPHYMDPFKLYDPVGGEHFNIFAAGLKTADRVVTVSHGYSWELKTSQGGWGLHQIINENDWKLQGIVNGIDTKEWNPELDVHLQSDGYMNYSLDTLQTGKPQCKAALQKELGLPVRDDVPLIGFIGRLDPQKGVDLIAEAVPWMMGQDVQLVMLGTGRRDLEQMLRQFECQHNDKIRGWVGFSVKTSHRITAGADILLMPSRFEPCGLNQLYAMKYGTIPVVHAVGGLRDTVQPFDPFNESGLGWTFSRAEASQLIHALGNCLLTYREYKKSWEGIQTRCMTQDLSWDNAAQNYEEVLIAAKYQW</sequence>